<dbReference type="EC" id="2.7.1.130" evidence="1"/>
<dbReference type="EMBL" id="CU928162">
    <property type="protein sequence ID" value="CAR07144.1"/>
    <property type="molecule type" value="Genomic_DNA"/>
</dbReference>
<dbReference type="RefSeq" id="WP_000570511.1">
    <property type="nucleotide sequence ID" value="NC_011745.1"/>
</dbReference>
<dbReference type="SMR" id="B7MS30"/>
<dbReference type="KEGG" id="ecq:ECED1_0942"/>
<dbReference type="HOGENOM" id="CLU_038816_2_0_6"/>
<dbReference type="UniPathway" id="UPA00359">
    <property type="reaction ID" value="UER00482"/>
</dbReference>
<dbReference type="Proteomes" id="UP000000748">
    <property type="component" value="Chromosome"/>
</dbReference>
<dbReference type="GO" id="GO:0005886">
    <property type="term" value="C:plasma membrane"/>
    <property type="evidence" value="ECO:0007669"/>
    <property type="project" value="TreeGrafter"/>
</dbReference>
<dbReference type="GO" id="GO:0005524">
    <property type="term" value="F:ATP binding"/>
    <property type="evidence" value="ECO:0007669"/>
    <property type="project" value="UniProtKB-UniRule"/>
</dbReference>
<dbReference type="GO" id="GO:0009029">
    <property type="term" value="F:tetraacyldisaccharide 4'-kinase activity"/>
    <property type="evidence" value="ECO:0007669"/>
    <property type="project" value="UniProtKB-UniRule"/>
</dbReference>
<dbReference type="GO" id="GO:0009245">
    <property type="term" value="P:lipid A biosynthetic process"/>
    <property type="evidence" value="ECO:0007669"/>
    <property type="project" value="UniProtKB-UniRule"/>
</dbReference>
<dbReference type="GO" id="GO:0009244">
    <property type="term" value="P:lipopolysaccharide core region biosynthetic process"/>
    <property type="evidence" value="ECO:0007669"/>
    <property type="project" value="TreeGrafter"/>
</dbReference>
<dbReference type="HAMAP" id="MF_00409">
    <property type="entry name" value="LpxK"/>
    <property type="match status" value="1"/>
</dbReference>
<dbReference type="InterPro" id="IPR003758">
    <property type="entry name" value="LpxK"/>
</dbReference>
<dbReference type="InterPro" id="IPR027417">
    <property type="entry name" value="P-loop_NTPase"/>
</dbReference>
<dbReference type="NCBIfam" id="TIGR00682">
    <property type="entry name" value="lpxK"/>
    <property type="match status" value="1"/>
</dbReference>
<dbReference type="PANTHER" id="PTHR42724">
    <property type="entry name" value="TETRAACYLDISACCHARIDE 4'-KINASE"/>
    <property type="match status" value="1"/>
</dbReference>
<dbReference type="PANTHER" id="PTHR42724:SF1">
    <property type="entry name" value="TETRAACYLDISACCHARIDE 4'-KINASE, MITOCHONDRIAL-RELATED"/>
    <property type="match status" value="1"/>
</dbReference>
<dbReference type="Pfam" id="PF02606">
    <property type="entry name" value="LpxK"/>
    <property type="match status" value="1"/>
</dbReference>
<dbReference type="SUPFAM" id="SSF52540">
    <property type="entry name" value="P-loop containing nucleoside triphosphate hydrolases"/>
    <property type="match status" value="1"/>
</dbReference>
<feature type="chain" id="PRO_1000134740" description="Tetraacyldisaccharide 4'-kinase">
    <location>
        <begin position="1"/>
        <end position="328"/>
    </location>
</feature>
<feature type="binding site" evidence="1">
    <location>
        <begin position="55"/>
        <end position="62"/>
    </location>
    <ligand>
        <name>ATP</name>
        <dbReference type="ChEBI" id="CHEBI:30616"/>
    </ligand>
</feature>
<proteinExistence type="inferred from homology"/>
<sequence length="328" mass="35540">MIEKIWSGESPLWRLLLPLSWLYGLVSGAIRLCYKLKLKRAWRAPIPVVVVGNLTAGGNGKTPVVVWLVEQLQQRGIRVGVVSRGYGGKAESYPLLLSADTTTAQAGDEPVLIYQRTGAPVAVSPVRSDAVKAILAQHPDVQIIVTDDGLQHYRLARDVEIVVIDGVRRFGNGWWLPAGPMRERAGRLKSVDAVIVNGGVPRSGEIPMHLLPGQAVNLRTGTRCDVAQLEHVVTIAGIGHPPRFFATLKMCGVQPEKCVPLADHQSLNHADVSALVSAGQTLVMTEKDAVKCRAFAEENWWYLPVDAQLSGDELAKLLAQLTSLASGH</sequence>
<accession>B7MS30</accession>
<keyword id="KW-0067">ATP-binding</keyword>
<keyword id="KW-0418">Kinase</keyword>
<keyword id="KW-0441">Lipid A biosynthesis</keyword>
<keyword id="KW-0444">Lipid biosynthesis</keyword>
<keyword id="KW-0443">Lipid metabolism</keyword>
<keyword id="KW-0547">Nucleotide-binding</keyword>
<keyword id="KW-0808">Transferase</keyword>
<name>LPXK_ECO81</name>
<gene>
    <name evidence="1" type="primary">lpxK</name>
    <name type="ordered locus">ECED1_0942</name>
</gene>
<reference key="1">
    <citation type="journal article" date="2009" name="PLoS Genet.">
        <title>Organised genome dynamics in the Escherichia coli species results in highly diverse adaptive paths.</title>
        <authorList>
            <person name="Touchon M."/>
            <person name="Hoede C."/>
            <person name="Tenaillon O."/>
            <person name="Barbe V."/>
            <person name="Baeriswyl S."/>
            <person name="Bidet P."/>
            <person name="Bingen E."/>
            <person name="Bonacorsi S."/>
            <person name="Bouchier C."/>
            <person name="Bouvet O."/>
            <person name="Calteau A."/>
            <person name="Chiapello H."/>
            <person name="Clermont O."/>
            <person name="Cruveiller S."/>
            <person name="Danchin A."/>
            <person name="Diard M."/>
            <person name="Dossat C."/>
            <person name="Karoui M.E."/>
            <person name="Frapy E."/>
            <person name="Garry L."/>
            <person name="Ghigo J.M."/>
            <person name="Gilles A.M."/>
            <person name="Johnson J."/>
            <person name="Le Bouguenec C."/>
            <person name="Lescat M."/>
            <person name="Mangenot S."/>
            <person name="Martinez-Jehanne V."/>
            <person name="Matic I."/>
            <person name="Nassif X."/>
            <person name="Oztas S."/>
            <person name="Petit M.A."/>
            <person name="Pichon C."/>
            <person name="Rouy Z."/>
            <person name="Ruf C.S."/>
            <person name="Schneider D."/>
            <person name="Tourret J."/>
            <person name="Vacherie B."/>
            <person name="Vallenet D."/>
            <person name="Medigue C."/>
            <person name="Rocha E.P.C."/>
            <person name="Denamur E."/>
        </authorList>
    </citation>
    <scope>NUCLEOTIDE SEQUENCE [LARGE SCALE GENOMIC DNA]</scope>
    <source>
        <strain>ED1a</strain>
    </source>
</reference>
<evidence type="ECO:0000255" key="1">
    <source>
        <dbReference type="HAMAP-Rule" id="MF_00409"/>
    </source>
</evidence>
<organism>
    <name type="scientific">Escherichia coli O81 (strain ED1a)</name>
    <dbReference type="NCBI Taxonomy" id="585397"/>
    <lineage>
        <taxon>Bacteria</taxon>
        <taxon>Pseudomonadati</taxon>
        <taxon>Pseudomonadota</taxon>
        <taxon>Gammaproteobacteria</taxon>
        <taxon>Enterobacterales</taxon>
        <taxon>Enterobacteriaceae</taxon>
        <taxon>Escherichia</taxon>
    </lineage>
</organism>
<protein>
    <recommendedName>
        <fullName evidence="1">Tetraacyldisaccharide 4'-kinase</fullName>
        <ecNumber evidence="1">2.7.1.130</ecNumber>
    </recommendedName>
    <alternativeName>
        <fullName evidence="1">Lipid A 4'-kinase</fullName>
    </alternativeName>
</protein>
<comment type="function">
    <text evidence="1">Transfers the gamma-phosphate of ATP to the 4'-position of a tetraacyldisaccharide 1-phosphate intermediate (termed DS-1-P) to form tetraacyldisaccharide 1,4'-bis-phosphate (lipid IVA).</text>
</comment>
<comment type="catalytic activity">
    <reaction evidence="1">
        <text>a lipid A disaccharide + ATP = a lipid IVA + ADP + H(+)</text>
        <dbReference type="Rhea" id="RHEA:67840"/>
        <dbReference type="ChEBI" id="CHEBI:15378"/>
        <dbReference type="ChEBI" id="CHEBI:30616"/>
        <dbReference type="ChEBI" id="CHEBI:176343"/>
        <dbReference type="ChEBI" id="CHEBI:176425"/>
        <dbReference type="ChEBI" id="CHEBI:456216"/>
        <dbReference type="EC" id="2.7.1.130"/>
    </reaction>
</comment>
<comment type="pathway">
    <text evidence="1">Glycolipid biosynthesis; lipid IV(A) biosynthesis; lipid IV(A) from (3R)-3-hydroxytetradecanoyl-[acyl-carrier-protein] and UDP-N-acetyl-alpha-D-glucosamine: step 6/6.</text>
</comment>
<comment type="similarity">
    <text evidence="1">Belongs to the LpxK family.</text>
</comment>